<reference key="1">
    <citation type="journal article" date="1995" name="Yeast">
        <title>The sequence of a 27 kb segment on the right arm of chromosome VII from Saccharomyces cerevisiae reveals MOL1, NAT2, RPL30B, RSR1, CYS4, PEM1/CHO2, NSR1 genes and ten new open reading frames.</title>
        <authorList>
            <person name="Skala J."/>
            <person name="Nawrocki A."/>
            <person name="Goffeau A."/>
        </authorList>
    </citation>
    <scope>NUCLEOTIDE SEQUENCE [GENOMIC DNA]</scope>
    <source>
        <strain>ATCC 204508 / S288c</strain>
    </source>
</reference>
<reference key="2">
    <citation type="journal article" date="1997" name="Nature">
        <title>The nucleotide sequence of Saccharomyces cerevisiae chromosome VII.</title>
        <authorList>
            <person name="Tettelin H."/>
            <person name="Agostoni-Carbone M.L."/>
            <person name="Albermann K."/>
            <person name="Albers M."/>
            <person name="Arroyo J."/>
            <person name="Backes U."/>
            <person name="Barreiros T."/>
            <person name="Bertani I."/>
            <person name="Bjourson A.J."/>
            <person name="Brueckner M."/>
            <person name="Bruschi C.V."/>
            <person name="Carignani G."/>
            <person name="Castagnoli L."/>
            <person name="Cerdan E."/>
            <person name="Clemente M.L."/>
            <person name="Coblenz A."/>
            <person name="Coglievina M."/>
            <person name="Coissac E."/>
            <person name="Defoor E."/>
            <person name="Del Bino S."/>
            <person name="Delius H."/>
            <person name="Delneri D."/>
            <person name="de Wergifosse P."/>
            <person name="Dujon B."/>
            <person name="Durand P."/>
            <person name="Entian K.-D."/>
            <person name="Eraso P."/>
            <person name="Escribano V."/>
            <person name="Fabiani L."/>
            <person name="Fartmann B."/>
            <person name="Feroli F."/>
            <person name="Feuermann M."/>
            <person name="Frontali L."/>
            <person name="Garcia-Gonzalez M."/>
            <person name="Garcia-Saez M.I."/>
            <person name="Goffeau A."/>
            <person name="Guerreiro P."/>
            <person name="Hani J."/>
            <person name="Hansen M."/>
            <person name="Hebling U."/>
            <person name="Hernandez K."/>
            <person name="Heumann K."/>
            <person name="Hilger F."/>
            <person name="Hofmann B."/>
            <person name="Indge K.J."/>
            <person name="James C.M."/>
            <person name="Klima R."/>
            <person name="Koetter P."/>
            <person name="Kramer B."/>
            <person name="Kramer W."/>
            <person name="Lauquin G."/>
            <person name="Leuther H."/>
            <person name="Louis E.J."/>
            <person name="Maillier E."/>
            <person name="Marconi A."/>
            <person name="Martegani E."/>
            <person name="Mazon M.J."/>
            <person name="Mazzoni C."/>
            <person name="McReynolds A.D.K."/>
            <person name="Melchioretto P."/>
            <person name="Mewes H.-W."/>
            <person name="Minenkova O."/>
            <person name="Mueller-Auer S."/>
            <person name="Nawrocki A."/>
            <person name="Netter P."/>
            <person name="Neu R."/>
            <person name="Nombela C."/>
            <person name="Oliver S.G."/>
            <person name="Panzeri L."/>
            <person name="Paoluzi S."/>
            <person name="Plevani P."/>
            <person name="Portetelle D."/>
            <person name="Portillo F."/>
            <person name="Potier S."/>
            <person name="Purnelle B."/>
            <person name="Rieger M."/>
            <person name="Riles L."/>
            <person name="Rinaldi T."/>
            <person name="Robben J."/>
            <person name="Rodrigues-Pousada C."/>
            <person name="Rodriguez-Belmonte E."/>
            <person name="Rodriguez-Torres A.M."/>
            <person name="Rose M."/>
            <person name="Ruzzi M."/>
            <person name="Saliola M."/>
            <person name="Sanchez-Perez M."/>
            <person name="Schaefer B."/>
            <person name="Schaefer M."/>
            <person name="Scharfe M."/>
            <person name="Schmidheini T."/>
            <person name="Schreer A."/>
            <person name="Skala J."/>
            <person name="Souciet J.-L."/>
            <person name="Steensma H.Y."/>
            <person name="Talla E."/>
            <person name="Thierry A."/>
            <person name="Vandenbol M."/>
            <person name="van der Aart Q.J.M."/>
            <person name="Van Dyck L."/>
            <person name="Vanoni M."/>
            <person name="Verhasselt P."/>
            <person name="Voet M."/>
            <person name="Volckaert G."/>
            <person name="Wambutt R."/>
            <person name="Watson M.D."/>
            <person name="Weber N."/>
            <person name="Wedler E."/>
            <person name="Wedler H."/>
            <person name="Wipfli P."/>
            <person name="Wolf K."/>
            <person name="Wright L.F."/>
            <person name="Zaccaria P."/>
            <person name="Zimmermann M."/>
            <person name="Zollner A."/>
            <person name="Kleine K."/>
        </authorList>
    </citation>
    <scope>NUCLEOTIDE SEQUENCE [LARGE SCALE GENOMIC DNA]</scope>
    <source>
        <strain>ATCC 204508 / S288c</strain>
    </source>
</reference>
<reference key="3">
    <citation type="journal article" date="2014" name="G3 (Bethesda)">
        <title>The reference genome sequence of Saccharomyces cerevisiae: Then and now.</title>
        <authorList>
            <person name="Engel S.R."/>
            <person name="Dietrich F.S."/>
            <person name="Fisk D.G."/>
            <person name="Binkley G."/>
            <person name="Balakrishnan R."/>
            <person name="Costanzo M.C."/>
            <person name="Dwight S.S."/>
            <person name="Hitz B.C."/>
            <person name="Karra K."/>
            <person name="Nash R.S."/>
            <person name="Weng S."/>
            <person name="Wong E.D."/>
            <person name="Lloyd P."/>
            <person name="Skrzypek M.S."/>
            <person name="Miyasato S.R."/>
            <person name="Simison M."/>
            <person name="Cherry J.M."/>
        </authorList>
    </citation>
    <scope>GENOME REANNOTATION</scope>
    <source>
        <strain>ATCC 204508 / S288c</strain>
    </source>
</reference>
<reference key="4">
    <citation type="journal article" date="2002" name="Nat. Biotechnol.">
        <title>An integrated approach for finding overlooked genes in yeast.</title>
        <authorList>
            <person name="Kumar A."/>
            <person name="Harrison P.M."/>
            <person name="Cheung K.-H."/>
            <person name="Lan N."/>
            <person name="Echols N."/>
            <person name="Bertone P."/>
            <person name="Miller P."/>
            <person name="Gerstein M.B."/>
            <person name="Snyder M."/>
        </authorList>
    </citation>
    <scope>NUCLEOTIDE SEQUENCE [GENOMIC DNA]</scope>
</reference>
<feature type="chain" id="PRO_0000245384" description="Uncharacterized protein YGR146C-A">
    <location>
        <begin position="1"/>
        <end position="53"/>
    </location>
</feature>
<feature type="transmembrane region" description="Helical" evidence="1">
    <location>
        <begin position="13"/>
        <end position="35"/>
    </location>
</feature>
<comment type="subcellular location">
    <subcellularLocation>
        <location evidence="2">Membrane</location>
        <topology evidence="2">Single-pass membrane protein</topology>
    </subcellularLocation>
</comment>
<proteinExistence type="predicted"/>
<sequence length="53" mass="6050">MGFLPECNLTCAFLLHSFTFPIAHCPSFSWASFFFTIRPPFFPKLALVCTIFS</sequence>
<dbReference type="EMBL" id="X85807">
    <property type="status" value="NOT_ANNOTATED_CDS"/>
    <property type="molecule type" value="Genomic_DNA"/>
</dbReference>
<dbReference type="EMBL" id="Z72931">
    <property type="status" value="NOT_ANNOTATED_CDS"/>
    <property type="molecule type" value="Genomic_DNA"/>
</dbReference>
<dbReference type="EMBL" id="Z72932">
    <property type="status" value="NOT_ANNOTATED_CDS"/>
    <property type="molecule type" value="Genomic_DNA"/>
</dbReference>
<dbReference type="EMBL" id="AF479896">
    <property type="protein sequence ID" value="AAL79209.1"/>
    <property type="molecule type" value="Genomic_DNA"/>
</dbReference>
<dbReference type="EMBL" id="BK006941">
    <property type="protein sequence ID" value="DAA08238.1"/>
    <property type="molecule type" value="Genomic_DNA"/>
</dbReference>
<dbReference type="RefSeq" id="NP_878079.1">
    <property type="nucleotide sequence ID" value="NM_001184594.1"/>
</dbReference>
<dbReference type="BioGRID" id="37001">
    <property type="interactions" value="7"/>
</dbReference>
<dbReference type="FunCoup" id="Q8TGT9">
    <property type="interactions" value="22"/>
</dbReference>
<dbReference type="STRING" id="4932.YGR146C-A"/>
<dbReference type="PaxDb" id="4932-YGR146C-A"/>
<dbReference type="EnsemblFungi" id="YGR146C-A_mRNA">
    <property type="protein sequence ID" value="YGR146C-A"/>
    <property type="gene ID" value="YGR146C-A"/>
</dbReference>
<dbReference type="GeneID" id="1466459"/>
<dbReference type="KEGG" id="sce:YGR146C-A"/>
<dbReference type="AGR" id="SGD:S000028638"/>
<dbReference type="SGD" id="S000028638">
    <property type="gene designation" value="YGR146C-A"/>
</dbReference>
<dbReference type="VEuPathDB" id="FungiDB:YGR146C-A"/>
<dbReference type="HOGENOM" id="CLU_209343_0_0_1"/>
<dbReference type="InParanoid" id="Q8TGT9"/>
<dbReference type="BioCyc" id="YEAST:G3O-31016-MONOMER"/>
<dbReference type="BioGRID-ORCS" id="1466459">
    <property type="hits" value="2 hits in 10 CRISPR screens"/>
</dbReference>
<dbReference type="PRO" id="PR:Q8TGT9"/>
<dbReference type="Proteomes" id="UP000002311">
    <property type="component" value="Chromosome VII"/>
</dbReference>
<dbReference type="RNAct" id="Q8TGT9">
    <property type="molecule type" value="protein"/>
</dbReference>
<dbReference type="GO" id="GO:0016020">
    <property type="term" value="C:membrane"/>
    <property type="evidence" value="ECO:0007669"/>
    <property type="project" value="UniProtKB-SubCell"/>
</dbReference>
<organism>
    <name type="scientific">Saccharomyces cerevisiae (strain ATCC 204508 / S288c)</name>
    <name type="common">Baker's yeast</name>
    <dbReference type="NCBI Taxonomy" id="559292"/>
    <lineage>
        <taxon>Eukaryota</taxon>
        <taxon>Fungi</taxon>
        <taxon>Dikarya</taxon>
        <taxon>Ascomycota</taxon>
        <taxon>Saccharomycotina</taxon>
        <taxon>Saccharomycetes</taxon>
        <taxon>Saccharomycetales</taxon>
        <taxon>Saccharomycetaceae</taxon>
        <taxon>Saccharomyces</taxon>
    </lineage>
</organism>
<protein>
    <recommendedName>
        <fullName>Uncharacterized protein YGR146C-A</fullName>
    </recommendedName>
</protein>
<gene>
    <name type="ordered locus">YGR146C-A</name>
</gene>
<name>YG146_YEAST</name>
<accession>Q8TGT9</accession>
<accession>D6VUS7</accession>
<keyword id="KW-0472">Membrane</keyword>
<keyword id="KW-1185">Reference proteome</keyword>
<keyword id="KW-0812">Transmembrane</keyword>
<keyword id="KW-1133">Transmembrane helix</keyword>
<evidence type="ECO:0000255" key="1"/>
<evidence type="ECO:0000305" key="2"/>